<evidence type="ECO:0000250" key="1"/>
<evidence type="ECO:0000255" key="2"/>
<evidence type="ECO:0000255" key="3">
    <source>
        <dbReference type="PROSITE-ProRule" id="PRU00280"/>
    </source>
</evidence>
<evidence type="ECO:0000269" key="4">
    <source>
    </source>
</evidence>
<evidence type="ECO:0000305" key="5"/>
<keyword id="KW-0067">ATP-binding</keyword>
<keyword id="KW-0186">Copper</keyword>
<keyword id="KW-0187">Copper transport</keyword>
<keyword id="KW-0406">Ion transport</keyword>
<keyword id="KW-0460">Magnesium</keyword>
<keyword id="KW-0472">Membrane</keyword>
<keyword id="KW-0479">Metal-binding</keyword>
<keyword id="KW-0547">Nucleotide-binding</keyword>
<keyword id="KW-1185">Reference proteome</keyword>
<keyword id="KW-0677">Repeat</keyword>
<keyword id="KW-1278">Translocase</keyword>
<keyword id="KW-0812">Transmembrane</keyword>
<keyword id="KW-1133">Transmembrane helix</keyword>
<keyword id="KW-0813">Transport</keyword>
<sequence>MATKLLSLTCIRKERFSERYPLVRKHLTRSRDGGGGSSSETAAFEIDDPISRAVFQVLGMTCSACAGSVEKAIKRLPGIHDAVIDALNNRAQILFYPNSVDVETIRETIEDAGFEASLIENEANERSRQVCRIRINGMTCTSCSSTIERVLQSVNGVQRAHVALAIEEAEIHYDPRLSSYDRLLEEIENAGFEAVLISTGEDVSKIDLKIDGELTDESMKVIERSLEALPGVQSVEISHGTDKISVLYKPDVTGPRNFIQVIESTVFGHSGHIKATIFSEGGVGRESQKQGEIKQYYKSFLWSLVFTVPVFLTAMVFMYIPGIKDLLMFKVINMLTVGEIIRCVLATPVQFVIGWRFYTGSYKALRRGSANMDVLIALGTNAAYFYSLYTVLRAATSPDFKGVDFFETSAMLISFIILGKYLEVMAKGKTSQAIAKLMNLAPDTAILLSLDKEGNVTGEEEIDGRLIQKNDVIKIVPGAKVASDGYVIWGQSHVNESMITGEARPVAKRKGDTVIGGTLNENGVLHVKVTRVGSESALAQIVRLVESAQLAKAPVQKLADRISKFFVPLVIFLSFSTWLAWFLAGKLHWYPESWIPSSMDSFELALQFGISVMVIACPCALGLATPTAVMVGTGVGASQGVLIKGGQALERAHKVNCIVFDKTGTLTMGKPVVVKTKLLKNMVLREFYELVAATEVNSEHPLAKAIVEYAKKFRDDEENPAWPEACDFVSITGKGVKATVKGREIMVGNKNLMNDHKVIIPDDAEELLADSEDMAQTGILVSINSELIGVLSVSDPLKPSAREAISILKSMNIKSIMVTGDNWGTANSIAREVGIDSVIAEAKPEQKAEKVKELQAAGHVVAMVGDGINDSPALVAADVGMAIGAGTDIAIEAADIVLMKSNLEDVITAIDLSRKTFSRIRLNYVWALGYNLMGIPIAAGVLFPGTRFRLPPWIAGAAMAASSVSVVCCSLLLKNYKRPKKLDHLEIREIQVERV</sequence>
<name>HMA5_ARATH</name>
<reference key="1">
    <citation type="journal article" date="2000" name="Nature">
        <title>Sequence and analysis of chromosome 1 of the plant Arabidopsis thaliana.</title>
        <authorList>
            <person name="Theologis A."/>
            <person name="Ecker J.R."/>
            <person name="Palm C.J."/>
            <person name="Federspiel N.A."/>
            <person name="Kaul S."/>
            <person name="White O."/>
            <person name="Alonso J."/>
            <person name="Altafi H."/>
            <person name="Araujo R."/>
            <person name="Bowman C.L."/>
            <person name="Brooks S.Y."/>
            <person name="Buehler E."/>
            <person name="Chan A."/>
            <person name="Chao Q."/>
            <person name="Chen H."/>
            <person name="Cheuk R.F."/>
            <person name="Chin C.W."/>
            <person name="Chung M.K."/>
            <person name="Conn L."/>
            <person name="Conway A.B."/>
            <person name="Conway A.R."/>
            <person name="Creasy T.H."/>
            <person name="Dewar K."/>
            <person name="Dunn P."/>
            <person name="Etgu P."/>
            <person name="Feldblyum T.V."/>
            <person name="Feng J.-D."/>
            <person name="Fong B."/>
            <person name="Fujii C.Y."/>
            <person name="Gill J.E."/>
            <person name="Goldsmith A.D."/>
            <person name="Haas B."/>
            <person name="Hansen N.F."/>
            <person name="Hughes B."/>
            <person name="Huizar L."/>
            <person name="Hunter J.L."/>
            <person name="Jenkins J."/>
            <person name="Johnson-Hopson C."/>
            <person name="Khan S."/>
            <person name="Khaykin E."/>
            <person name="Kim C.J."/>
            <person name="Koo H.L."/>
            <person name="Kremenetskaia I."/>
            <person name="Kurtz D.B."/>
            <person name="Kwan A."/>
            <person name="Lam B."/>
            <person name="Langin-Hooper S."/>
            <person name="Lee A."/>
            <person name="Lee J.M."/>
            <person name="Lenz C.A."/>
            <person name="Li J.H."/>
            <person name="Li Y.-P."/>
            <person name="Lin X."/>
            <person name="Liu S.X."/>
            <person name="Liu Z.A."/>
            <person name="Luros J.S."/>
            <person name="Maiti R."/>
            <person name="Marziali A."/>
            <person name="Militscher J."/>
            <person name="Miranda M."/>
            <person name="Nguyen M."/>
            <person name="Nierman W.C."/>
            <person name="Osborne B.I."/>
            <person name="Pai G."/>
            <person name="Peterson J."/>
            <person name="Pham P.K."/>
            <person name="Rizzo M."/>
            <person name="Rooney T."/>
            <person name="Rowley D."/>
            <person name="Sakano H."/>
            <person name="Salzberg S.L."/>
            <person name="Schwartz J.R."/>
            <person name="Shinn P."/>
            <person name="Southwick A.M."/>
            <person name="Sun H."/>
            <person name="Tallon L.J."/>
            <person name="Tambunga G."/>
            <person name="Toriumi M.J."/>
            <person name="Town C.D."/>
            <person name="Utterback T."/>
            <person name="Van Aken S."/>
            <person name="Vaysberg M."/>
            <person name="Vysotskaia V.S."/>
            <person name="Walker M."/>
            <person name="Wu D."/>
            <person name="Yu G."/>
            <person name="Fraser C.M."/>
            <person name="Venter J.C."/>
            <person name="Davis R.W."/>
        </authorList>
    </citation>
    <scope>NUCLEOTIDE SEQUENCE [LARGE SCALE GENOMIC DNA]</scope>
    <source>
        <strain>cv. Columbia</strain>
    </source>
</reference>
<reference key="2">
    <citation type="journal article" date="2017" name="Plant J.">
        <title>Araport11: a complete reannotation of the Arabidopsis thaliana reference genome.</title>
        <authorList>
            <person name="Cheng C.Y."/>
            <person name="Krishnakumar V."/>
            <person name="Chan A.P."/>
            <person name="Thibaud-Nissen F."/>
            <person name="Schobel S."/>
            <person name="Town C.D."/>
        </authorList>
    </citation>
    <scope>GENOME REANNOTATION</scope>
    <source>
        <strain>cv. Columbia</strain>
    </source>
</reference>
<reference key="3">
    <citation type="journal article" date="2006" name="Plant J.">
        <title>The Arabidopsis heavy metal P-type ATPase HMA5 interacts with metallochaperones and functions in copper detoxification of roots.</title>
        <authorList>
            <person name="Andres-Colas N."/>
            <person name="Sancenon V."/>
            <person name="Rodriguez-Navarro S."/>
            <person name="Mayo S."/>
            <person name="Thiele D.J."/>
            <person name="Ecker J.R."/>
            <person name="Puig S."/>
            <person name="Penarrubia L."/>
        </authorList>
    </citation>
    <scope>FUNCTION</scope>
    <scope>INTERACTION WITH ATX1</scope>
    <scope>TISSUE SPECIFICITY</scope>
    <scope>INDUCTION BY COPPER</scope>
    <scope>DISRUPTION PHENOTYPE</scope>
</reference>
<protein>
    <recommendedName>
        <fullName>Probable copper-transporting ATPase HMA5</fullName>
        <ecNumber>7.2.2.8</ecNumber>
    </recommendedName>
    <alternativeName>
        <fullName>Probable copper-transporting ATPase 3</fullName>
    </alternativeName>
    <alternativeName>
        <fullName>Protein HEAVY METAL ATPASE 5</fullName>
    </alternativeName>
</protein>
<proteinExistence type="evidence at protein level"/>
<feature type="chain" id="PRO_0000046404" description="Probable copper-transporting ATPase HMA5">
    <location>
        <begin position="1"/>
        <end position="995"/>
    </location>
</feature>
<feature type="topological domain" description="Cytoplasmic" evidence="2">
    <location>
        <begin position="1"/>
        <end position="299"/>
    </location>
</feature>
<feature type="transmembrane region" description="Helical" evidence="2">
    <location>
        <begin position="300"/>
        <end position="321"/>
    </location>
</feature>
<feature type="topological domain" description="Extracellular" evidence="2">
    <location>
        <begin position="322"/>
        <end position="340"/>
    </location>
</feature>
<feature type="transmembrane region" description="Helical" evidence="2">
    <location>
        <begin position="341"/>
        <end position="360"/>
    </location>
</feature>
<feature type="topological domain" description="Cytoplasmic" evidence="2">
    <location>
        <begin position="361"/>
        <end position="367"/>
    </location>
</feature>
<feature type="transmembrane region" description="Helical" evidence="2">
    <location>
        <begin position="368"/>
        <end position="388"/>
    </location>
</feature>
<feature type="topological domain" description="Extracellular" evidence="2">
    <location>
        <begin position="389"/>
        <end position="406"/>
    </location>
</feature>
<feature type="transmembrane region" description="Helical" evidence="2">
    <location>
        <begin position="407"/>
        <end position="427"/>
    </location>
</feature>
<feature type="topological domain" description="Cytoplasmic" evidence="2">
    <location>
        <begin position="428"/>
        <end position="561"/>
    </location>
</feature>
<feature type="transmembrane region" description="Helical" evidence="2">
    <location>
        <begin position="562"/>
        <end position="584"/>
    </location>
</feature>
<feature type="topological domain" description="Extracellular" evidence="2">
    <location>
        <begin position="585"/>
        <end position="605"/>
    </location>
</feature>
<feature type="transmembrane region" description="Helical" evidence="2">
    <location>
        <begin position="606"/>
        <end position="623"/>
    </location>
</feature>
<feature type="topological domain" description="Cytoplasmic" evidence="2">
    <location>
        <begin position="624"/>
        <end position="920"/>
    </location>
</feature>
<feature type="transmembrane region" description="Helical" evidence="2">
    <location>
        <begin position="921"/>
        <end position="940"/>
    </location>
</feature>
<feature type="topological domain" description="Extracellular" evidence="2">
    <location>
        <begin position="941"/>
        <end position="952"/>
    </location>
</feature>
<feature type="transmembrane region" description="Helical" evidence="2">
    <location>
        <begin position="953"/>
        <end position="971"/>
    </location>
</feature>
<feature type="topological domain" description="Cytoplasmic" evidence="2">
    <location>
        <begin position="972"/>
        <end position="995"/>
    </location>
</feature>
<feature type="domain" description="HMA 1" evidence="3">
    <location>
        <begin position="51"/>
        <end position="117"/>
    </location>
</feature>
<feature type="domain" description="HMA 2" evidence="3">
    <location>
        <begin position="129"/>
        <end position="195"/>
    </location>
</feature>
<feature type="domain" description="HMA 3; degenerate" evidence="3">
    <location>
        <begin position="204"/>
        <end position="270"/>
    </location>
</feature>
<feature type="active site" description="4-aspartylphosphate intermediate" evidence="1">
    <location>
        <position position="661"/>
    </location>
</feature>
<feature type="binding site" evidence="3">
    <location>
        <position position="62"/>
    </location>
    <ligand>
        <name>Cu(+)</name>
        <dbReference type="ChEBI" id="CHEBI:49552"/>
        <label>1</label>
    </ligand>
</feature>
<feature type="binding site" evidence="3">
    <location>
        <position position="65"/>
    </location>
    <ligand>
        <name>Cu(+)</name>
        <dbReference type="ChEBI" id="CHEBI:49552"/>
        <label>1</label>
    </ligand>
</feature>
<feature type="binding site" evidence="3">
    <location>
        <position position="140"/>
    </location>
    <ligand>
        <name>Cu(+)</name>
        <dbReference type="ChEBI" id="CHEBI:49552"/>
        <label>2</label>
    </ligand>
</feature>
<feature type="binding site" evidence="3">
    <location>
        <position position="143"/>
    </location>
    <ligand>
        <name>Cu(+)</name>
        <dbReference type="ChEBI" id="CHEBI:49552"/>
        <label>2</label>
    </ligand>
</feature>
<feature type="binding site">
    <location>
        <position position="866"/>
    </location>
    <ligand>
        <name>Mg(2+)</name>
        <dbReference type="ChEBI" id="CHEBI:18420"/>
    </ligand>
</feature>
<feature type="binding site">
    <location>
        <position position="870"/>
    </location>
    <ligand>
        <name>Mg(2+)</name>
        <dbReference type="ChEBI" id="CHEBI:18420"/>
    </ligand>
</feature>
<organism>
    <name type="scientific">Arabidopsis thaliana</name>
    <name type="common">Mouse-ear cress</name>
    <dbReference type="NCBI Taxonomy" id="3702"/>
    <lineage>
        <taxon>Eukaryota</taxon>
        <taxon>Viridiplantae</taxon>
        <taxon>Streptophyta</taxon>
        <taxon>Embryophyta</taxon>
        <taxon>Tracheophyta</taxon>
        <taxon>Spermatophyta</taxon>
        <taxon>Magnoliopsida</taxon>
        <taxon>eudicotyledons</taxon>
        <taxon>Gunneridae</taxon>
        <taxon>Pentapetalae</taxon>
        <taxon>rosids</taxon>
        <taxon>malvids</taxon>
        <taxon>Brassicales</taxon>
        <taxon>Brassicaceae</taxon>
        <taxon>Camelineae</taxon>
        <taxon>Arabidopsis</taxon>
    </lineage>
</organism>
<comment type="function">
    <text evidence="4">Involved in copper import into the cell. May play a role in copper detoxification in roots.</text>
</comment>
<comment type="catalytic activity">
    <reaction>
        <text>Cu(+)(in) + ATP + H2O = Cu(+)(out) + ADP + phosphate + H(+)</text>
        <dbReference type="Rhea" id="RHEA:25792"/>
        <dbReference type="ChEBI" id="CHEBI:15377"/>
        <dbReference type="ChEBI" id="CHEBI:15378"/>
        <dbReference type="ChEBI" id="CHEBI:30616"/>
        <dbReference type="ChEBI" id="CHEBI:43474"/>
        <dbReference type="ChEBI" id="CHEBI:49552"/>
        <dbReference type="ChEBI" id="CHEBI:456216"/>
        <dbReference type="EC" id="7.2.2.8"/>
    </reaction>
</comment>
<comment type="subunit">
    <text evidence="4">Interacts with ATX1.</text>
</comment>
<comment type="subcellular location">
    <subcellularLocation>
        <location>Membrane</location>
        <topology>Multi-pass membrane protein</topology>
    </subcellularLocation>
</comment>
<comment type="tissue specificity">
    <text evidence="4">Expressed in roots and flowers.</text>
</comment>
<comment type="induction">
    <text evidence="4">By copper.</text>
</comment>
<comment type="disruption phenotype">
    <text evidence="4">No visible phenotype under normal growth conditions, but mutant plants are hypersensitive to copper excess.</text>
</comment>
<comment type="similarity">
    <text evidence="5">Belongs to the cation transport ATPase (P-type) (TC 3.A.3) family. Type IB subfamily.</text>
</comment>
<comment type="sequence caution" evidence="5">
    <conflict type="erroneous gene model prediction">
        <sequence resource="EMBL-CDS" id="AAF19707"/>
    </conflict>
</comment>
<accession>Q9SH30</accession>
<dbReference type="EC" id="7.2.2.8"/>
<dbReference type="EMBL" id="AC008047">
    <property type="protein sequence ID" value="AAF19707.1"/>
    <property type="status" value="ALT_SEQ"/>
    <property type="molecule type" value="Genomic_DNA"/>
</dbReference>
<dbReference type="EMBL" id="CP002684">
    <property type="protein sequence ID" value="AEE34100.1"/>
    <property type="molecule type" value="Genomic_DNA"/>
</dbReference>
<dbReference type="PIR" id="B96660">
    <property type="entry name" value="B96660"/>
</dbReference>
<dbReference type="RefSeq" id="NP_176533.1">
    <property type="nucleotide sequence ID" value="NM_105023.2"/>
</dbReference>
<dbReference type="SMR" id="Q9SH30"/>
<dbReference type="BioGRID" id="27871">
    <property type="interactions" value="2"/>
</dbReference>
<dbReference type="FunCoup" id="Q9SH30">
    <property type="interactions" value="2442"/>
</dbReference>
<dbReference type="IntAct" id="Q9SH30">
    <property type="interactions" value="1"/>
</dbReference>
<dbReference type="STRING" id="3702.Q9SH30"/>
<dbReference type="PaxDb" id="3702-AT1G63440.1"/>
<dbReference type="ProteomicsDB" id="230230"/>
<dbReference type="EnsemblPlants" id="AT1G63440.1">
    <property type="protein sequence ID" value="AT1G63440.1"/>
    <property type="gene ID" value="AT1G63440"/>
</dbReference>
<dbReference type="GeneID" id="842650"/>
<dbReference type="Gramene" id="AT1G63440.1">
    <property type="protein sequence ID" value="AT1G63440.1"/>
    <property type="gene ID" value="AT1G63440"/>
</dbReference>
<dbReference type="KEGG" id="ath:AT1G63440"/>
<dbReference type="Araport" id="AT1G63440"/>
<dbReference type="TAIR" id="AT1G63440">
    <property type="gene designation" value="HMA5"/>
</dbReference>
<dbReference type="eggNOG" id="KOG0207">
    <property type="taxonomic scope" value="Eukaryota"/>
</dbReference>
<dbReference type="HOGENOM" id="CLU_001771_0_3_1"/>
<dbReference type="InParanoid" id="Q9SH30"/>
<dbReference type="OMA" id="WECFFDE"/>
<dbReference type="PhylomeDB" id="Q9SH30"/>
<dbReference type="BioCyc" id="ARA:MONOMER-14503"/>
<dbReference type="BioCyc" id="MetaCyc:MONOMER-14503"/>
<dbReference type="BRENDA" id="7.2.2.9">
    <property type="organism ID" value="399"/>
</dbReference>
<dbReference type="PRO" id="PR:Q9SH30"/>
<dbReference type="Proteomes" id="UP000006548">
    <property type="component" value="Chromosome 1"/>
</dbReference>
<dbReference type="ExpressionAtlas" id="Q9SH30">
    <property type="expression patterns" value="baseline and differential"/>
</dbReference>
<dbReference type="GO" id="GO:0016020">
    <property type="term" value="C:membrane"/>
    <property type="evidence" value="ECO:0007669"/>
    <property type="project" value="UniProtKB-SubCell"/>
</dbReference>
<dbReference type="GO" id="GO:0005524">
    <property type="term" value="F:ATP binding"/>
    <property type="evidence" value="ECO:0007669"/>
    <property type="project" value="UniProtKB-KW"/>
</dbReference>
<dbReference type="GO" id="GO:0016887">
    <property type="term" value="F:ATP hydrolysis activity"/>
    <property type="evidence" value="ECO:0007669"/>
    <property type="project" value="InterPro"/>
</dbReference>
<dbReference type="GO" id="GO:0005507">
    <property type="term" value="F:copper ion binding"/>
    <property type="evidence" value="ECO:0007669"/>
    <property type="project" value="InterPro"/>
</dbReference>
<dbReference type="GO" id="GO:0140581">
    <property type="term" value="F:P-type monovalent copper transporter activity"/>
    <property type="evidence" value="ECO:0007669"/>
    <property type="project" value="UniProtKB-EC"/>
</dbReference>
<dbReference type="GO" id="GO:0010273">
    <property type="term" value="P:detoxification of copper ion"/>
    <property type="evidence" value="ECO:0000315"/>
    <property type="project" value="TAIR"/>
</dbReference>
<dbReference type="GO" id="GO:0046688">
    <property type="term" value="P:response to copper ion"/>
    <property type="evidence" value="ECO:0000315"/>
    <property type="project" value="TAIR"/>
</dbReference>
<dbReference type="CDD" id="cd00371">
    <property type="entry name" value="HMA"/>
    <property type="match status" value="3"/>
</dbReference>
<dbReference type="CDD" id="cd02094">
    <property type="entry name" value="P-type_ATPase_Cu-like"/>
    <property type="match status" value="1"/>
</dbReference>
<dbReference type="FunFam" id="3.30.70.100:FF:000001">
    <property type="entry name" value="ATPase copper transporting beta"/>
    <property type="match status" value="1"/>
</dbReference>
<dbReference type="FunFam" id="3.40.1110.10:FF:000038">
    <property type="entry name" value="Copper-exporting P-type ATPase"/>
    <property type="match status" value="1"/>
</dbReference>
<dbReference type="FunFam" id="2.70.150.10:FF:000002">
    <property type="entry name" value="Copper-transporting ATPase 1, putative"/>
    <property type="match status" value="1"/>
</dbReference>
<dbReference type="FunFam" id="3.30.70.100:FF:000033">
    <property type="entry name" value="Copper-transporting ATPase HMA5"/>
    <property type="match status" value="1"/>
</dbReference>
<dbReference type="FunFam" id="3.40.1110.10:FF:000084">
    <property type="entry name" value="Probable copper-transporting ATPase HMA5"/>
    <property type="match status" value="1"/>
</dbReference>
<dbReference type="FunFam" id="3.40.50.1000:FF:000031">
    <property type="entry name" value="Probable copper-transporting ATPase HMA5"/>
    <property type="match status" value="1"/>
</dbReference>
<dbReference type="Gene3D" id="3.30.70.100">
    <property type="match status" value="3"/>
</dbReference>
<dbReference type="Gene3D" id="3.40.1110.10">
    <property type="entry name" value="Calcium-transporting ATPase, cytoplasmic domain N"/>
    <property type="match status" value="2"/>
</dbReference>
<dbReference type="Gene3D" id="2.70.150.10">
    <property type="entry name" value="Calcium-transporting ATPase, cytoplasmic transduction domain A"/>
    <property type="match status" value="1"/>
</dbReference>
<dbReference type="Gene3D" id="3.40.50.1000">
    <property type="entry name" value="HAD superfamily/HAD-like"/>
    <property type="match status" value="1"/>
</dbReference>
<dbReference type="InterPro" id="IPR023299">
    <property type="entry name" value="ATPase_P-typ_cyto_dom_N"/>
</dbReference>
<dbReference type="InterPro" id="IPR018303">
    <property type="entry name" value="ATPase_P-typ_P_site"/>
</dbReference>
<dbReference type="InterPro" id="IPR023298">
    <property type="entry name" value="ATPase_P-typ_TM_dom_sf"/>
</dbReference>
<dbReference type="InterPro" id="IPR008250">
    <property type="entry name" value="ATPase_P-typ_transduc_dom_A_sf"/>
</dbReference>
<dbReference type="InterPro" id="IPR036412">
    <property type="entry name" value="HAD-like_sf"/>
</dbReference>
<dbReference type="InterPro" id="IPR023214">
    <property type="entry name" value="HAD_sf"/>
</dbReference>
<dbReference type="InterPro" id="IPR017969">
    <property type="entry name" value="Heavy-metal-associated_CS"/>
</dbReference>
<dbReference type="InterPro" id="IPR006122">
    <property type="entry name" value="HMA_Cu_ion-bd"/>
</dbReference>
<dbReference type="InterPro" id="IPR006121">
    <property type="entry name" value="HMA_dom"/>
</dbReference>
<dbReference type="InterPro" id="IPR036163">
    <property type="entry name" value="HMA_dom_sf"/>
</dbReference>
<dbReference type="InterPro" id="IPR027256">
    <property type="entry name" value="P-typ_ATPase_IB"/>
</dbReference>
<dbReference type="InterPro" id="IPR001757">
    <property type="entry name" value="P_typ_ATPase"/>
</dbReference>
<dbReference type="InterPro" id="IPR044492">
    <property type="entry name" value="P_typ_ATPase_HD_dom"/>
</dbReference>
<dbReference type="NCBIfam" id="TIGR01525">
    <property type="entry name" value="ATPase-IB_hvy"/>
    <property type="match status" value="1"/>
</dbReference>
<dbReference type="NCBIfam" id="TIGR01494">
    <property type="entry name" value="ATPase_P-type"/>
    <property type="match status" value="1"/>
</dbReference>
<dbReference type="NCBIfam" id="TIGR00003">
    <property type="entry name" value="copper ion binding protein"/>
    <property type="match status" value="1"/>
</dbReference>
<dbReference type="PANTHER" id="PTHR46594">
    <property type="entry name" value="P-TYPE CATION-TRANSPORTING ATPASE"/>
    <property type="match status" value="1"/>
</dbReference>
<dbReference type="PANTHER" id="PTHR46594:SF4">
    <property type="entry name" value="P-TYPE CATION-TRANSPORTING ATPASE"/>
    <property type="match status" value="1"/>
</dbReference>
<dbReference type="Pfam" id="PF00122">
    <property type="entry name" value="E1-E2_ATPase"/>
    <property type="match status" value="1"/>
</dbReference>
<dbReference type="Pfam" id="PF00403">
    <property type="entry name" value="HMA"/>
    <property type="match status" value="3"/>
</dbReference>
<dbReference type="Pfam" id="PF00702">
    <property type="entry name" value="Hydrolase"/>
    <property type="match status" value="1"/>
</dbReference>
<dbReference type="PRINTS" id="PR00119">
    <property type="entry name" value="CATATPASE"/>
</dbReference>
<dbReference type="PRINTS" id="PR00942">
    <property type="entry name" value="CUATPASEI"/>
</dbReference>
<dbReference type="SFLD" id="SFLDG00002">
    <property type="entry name" value="C1.7:_P-type_atpase_like"/>
    <property type="match status" value="1"/>
</dbReference>
<dbReference type="SFLD" id="SFLDF00027">
    <property type="entry name" value="p-type_atpase"/>
    <property type="match status" value="1"/>
</dbReference>
<dbReference type="SUPFAM" id="SSF81653">
    <property type="entry name" value="Calcium ATPase, transduction domain A"/>
    <property type="match status" value="1"/>
</dbReference>
<dbReference type="SUPFAM" id="SSF81665">
    <property type="entry name" value="Calcium ATPase, transmembrane domain M"/>
    <property type="match status" value="1"/>
</dbReference>
<dbReference type="SUPFAM" id="SSF56784">
    <property type="entry name" value="HAD-like"/>
    <property type="match status" value="1"/>
</dbReference>
<dbReference type="SUPFAM" id="SSF55008">
    <property type="entry name" value="HMA, heavy metal-associated domain"/>
    <property type="match status" value="3"/>
</dbReference>
<dbReference type="PROSITE" id="PS00154">
    <property type="entry name" value="ATPASE_E1_E2"/>
    <property type="match status" value="1"/>
</dbReference>
<dbReference type="PROSITE" id="PS01047">
    <property type="entry name" value="HMA_1"/>
    <property type="match status" value="1"/>
</dbReference>
<dbReference type="PROSITE" id="PS50846">
    <property type="entry name" value="HMA_2"/>
    <property type="match status" value="3"/>
</dbReference>
<gene>
    <name type="primary">HMA5</name>
    <name type="ordered locus">At1g63440</name>
    <name type="ORF">F2K11.18</name>
</gene>